<feature type="chain" id="PRO_0000216314" description="Uncharacterized protein PM1121">
    <location>
        <begin position="1"/>
        <end position="123"/>
    </location>
</feature>
<keyword id="KW-1185">Reference proteome</keyword>
<gene>
    <name type="ordered locus">PM1121</name>
</gene>
<name>Y1121_PASMU</name>
<proteinExistence type="predicted"/>
<dbReference type="EMBL" id="AE004439">
    <property type="protein sequence ID" value="AAK03205.1"/>
    <property type="molecule type" value="Genomic_DNA"/>
</dbReference>
<dbReference type="EnsemblBacteria" id="AAK03205">
    <property type="protein sequence ID" value="AAK03205"/>
    <property type="gene ID" value="PM1121"/>
</dbReference>
<dbReference type="KEGG" id="pmu:PM1121"/>
<dbReference type="HOGENOM" id="CLU_2013073_0_0_6"/>
<dbReference type="Proteomes" id="UP000000809">
    <property type="component" value="Chromosome"/>
</dbReference>
<sequence length="123" mass="14498">MALKRCCSYSGWELQTRDNQFRCIHNFLFIRYLLSYGETVAELTFRCKYVVFTPQLACLCFPAVRANDPRSYGCALEFYPFRVLVEWYFRWTSALFSIYLLEQHPTLCYDLTCRGSGHGKDAQ</sequence>
<reference key="1">
    <citation type="journal article" date="2001" name="Proc. Natl. Acad. Sci. U.S.A.">
        <title>Complete genomic sequence of Pasteurella multocida Pm70.</title>
        <authorList>
            <person name="May B.J."/>
            <person name="Zhang Q."/>
            <person name="Li L.L."/>
            <person name="Paustian M.L."/>
            <person name="Whittam T.S."/>
            <person name="Kapur V."/>
        </authorList>
    </citation>
    <scope>NUCLEOTIDE SEQUENCE [LARGE SCALE GENOMIC DNA]</scope>
    <source>
        <strain>Pm70</strain>
    </source>
</reference>
<accession>Q9CLT8</accession>
<protein>
    <recommendedName>
        <fullName>Uncharacterized protein PM1121</fullName>
    </recommendedName>
</protein>
<organism>
    <name type="scientific">Pasteurella multocida (strain Pm70)</name>
    <dbReference type="NCBI Taxonomy" id="272843"/>
    <lineage>
        <taxon>Bacteria</taxon>
        <taxon>Pseudomonadati</taxon>
        <taxon>Pseudomonadota</taxon>
        <taxon>Gammaproteobacteria</taxon>
        <taxon>Pasteurellales</taxon>
        <taxon>Pasteurellaceae</taxon>
        <taxon>Pasteurella</taxon>
    </lineage>
</organism>